<name>RS7_SYNFM</name>
<evidence type="ECO:0000255" key="1">
    <source>
        <dbReference type="HAMAP-Rule" id="MF_00480"/>
    </source>
</evidence>
<evidence type="ECO:0000305" key="2"/>
<gene>
    <name evidence="1" type="primary">rpsG</name>
    <name type="ordered locus">Sfum_1552</name>
</gene>
<dbReference type="EMBL" id="CP000478">
    <property type="protein sequence ID" value="ABK17239.1"/>
    <property type="molecule type" value="Genomic_DNA"/>
</dbReference>
<dbReference type="RefSeq" id="WP_011698410.1">
    <property type="nucleotide sequence ID" value="NC_008554.1"/>
</dbReference>
<dbReference type="SMR" id="A0LII7"/>
<dbReference type="FunCoup" id="A0LII7">
    <property type="interactions" value="676"/>
</dbReference>
<dbReference type="STRING" id="335543.Sfum_1552"/>
<dbReference type="KEGG" id="sfu:Sfum_1552"/>
<dbReference type="eggNOG" id="COG0049">
    <property type="taxonomic scope" value="Bacteria"/>
</dbReference>
<dbReference type="HOGENOM" id="CLU_072226_1_1_7"/>
<dbReference type="InParanoid" id="A0LII7"/>
<dbReference type="OrthoDB" id="9807653at2"/>
<dbReference type="Proteomes" id="UP000001784">
    <property type="component" value="Chromosome"/>
</dbReference>
<dbReference type="GO" id="GO:0015935">
    <property type="term" value="C:small ribosomal subunit"/>
    <property type="evidence" value="ECO:0007669"/>
    <property type="project" value="InterPro"/>
</dbReference>
<dbReference type="GO" id="GO:0019843">
    <property type="term" value="F:rRNA binding"/>
    <property type="evidence" value="ECO:0007669"/>
    <property type="project" value="UniProtKB-UniRule"/>
</dbReference>
<dbReference type="GO" id="GO:0003735">
    <property type="term" value="F:structural constituent of ribosome"/>
    <property type="evidence" value="ECO:0007669"/>
    <property type="project" value="InterPro"/>
</dbReference>
<dbReference type="GO" id="GO:0000049">
    <property type="term" value="F:tRNA binding"/>
    <property type="evidence" value="ECO:0007669"/>
    <property type="project" value="UniProtKB-UniRule"/>
</dbReference>
<dbReference type="GO" id="GO:0006412">
    <property type="term" value="P:translation"/>
    <property type="evidence" value="ECO:0007669"/>
    <property type="project" value="UniProtKB-UniRule"/>
</dbReference>
<dbReference type="CDD" id="cd14869">
    <property type="entry name" value="uS7_Bacteria"/>
    <property type="match status" value="1"/>
</dbReference>
<dbReference type="FunFam" id="1.10.455.10:FF:000001">
    <property type="entry name" value="30S ribosomal protein S7"/>
    <property type="match status" value="1"/>
</dbReference>
<dbReference type="Gene3D" id="1.10.455.10">
    <property type="entry name" value="Ribosomal protein S7 domain"/>
    <property type="match status" value="1"/>
</dbReference>
<dbReference type="HAMAP" id="MF_00480_B">
    <property type="entry name" value="Ribosomal_uS7_B"/>
    <property type="match status" value="1"/>
</dbReference>
<dbReference type="InterPro" id="IPR000235">
    <property type="entry name" value="Ribosomal_uS7"/>
</dbReference>
<dbReference type="InterPro" id="IPR005717">
    <property type="entry name" value="Ribosomal_uS7_bac/org-type"/>
</dbReference>
<dbReference type="InterPro" id="IPR020606">
    <property type="entry name" value="Ribosomal_uS7_CS"/>
</dbReference>
<dbReference type="InterPro" id="IPR023798">
    <property type="entry name" value="Ribosomal_uS7_dom"/>
</dbReference>
<dbReference type="InterPro" id="IPR036823">
    <property type="entry name" value="Ribosomal_uS7_dom_sf"/>
</dbReference>
<dbReference type="NCBIfam" id="TIGR01029">
    <property type="entry name" value="rpsG_bact"/>
    <property type="match status" value="1"/>
</dbReference>
<dbReference type="PANTHER" id="PTHR11205">
    <property type="entry name" value="RIBOSOMAL PROTEIN S7"/>
    <property type="match status" value="1"/>
</dbReference>
<dbReference type="Pfam" id="PF00177">
    <property type="entry name" value="Ribosomal_S7"/>
    <property type="match status" value="1"/>
</dbReference>
<dbReference type="PIRSF" id="PIRSF002122">
    <property type="entry name" value="RPS7p_RPS7a_RPS5e_RPS7o"/>
    <property type="match status" value="1"/>
</dbReference>
<dbReference type="SUPFAM" id="SSF47973">
    <property type="entry name" value="Ribosomal protein S7"/>
    <property type="match status" value="1"/>
</dbReference>
<dbReference type="PROSITE" id="PS00052">
    <property type="entry name" value="RIBOSOMAL_S7"/>
    <property type="match status" value="1"/>
</dbReference>
<accession>A0LII7</accession>
<sequence>MPRRREVPKRYVLPDPKYNSKLAAKFINNLMRRGKKSLAEHVLYGALDLIEQRSKQDPLDLFHKAMENVRPVVEVKSRRVGGATYQVPVEVRHERRDALAMRWIINYAKQRTEKTMIQRLAGELQDAAQNRGGSVKKREDTHRMAEANKAFAHYRW</sequence>
<comment type="function">
    <text evidence="1">One of the primary rRNA binding proteins, it binds directly to 16S rRNA where it nucleates assembly of the head domain of the 30S subunit. Is located at the subunit interface close to the decoding center, probably blocks exit of the E-site tRNA.</text>
</comment>
<comment type="subunit">
    <text evidence="1">Part of the 30S ribosomal subunit. Contacts proteins S9 and S11.</text>
</comment>
<comment type="similarity">
    <text evidence="1">Belongs to the universal ribosomal protein uS7 family.</text>
</comment>
<reference key="1">
    <citation type="submission" date="2006-10" db="EMBL/GenBank/DDBJ databases">
        <title>Complete sequence of Syntrophobacter fumaroxidans MPOB.</title>
        <authorList>
            <consortium name="US DOE Joint Genome Institute"/>
            <person name="Copeland A."/>
            <person name="Lucas S."/>
            <person name="Lapidus A."/>
            <person name="Barry K."/>
            <person name="Detter J.C."/>
            <person name="Glavina del Rio T."/>
            <person name="Hammon N."/>
            <person name="Israni S."/>
            <person name="Pitluck S."/>
            <person name="Goltsman E.G."/>
            <person name="Martinez M."/>
            <person name="Schmutz J."/>
            <person name="Larimer F."/>
            <person name="Land M."/>
            <person name="Hauser L."/>
            <person name="Kyrpides N."/>
            <person name="Kim E."/>
            <person name="Boone D.R."/>
            <person name="Brockman F."/>
            <person name="Culley D."/>
            <person name="Ferry J."/>
            <person name="Gunsalus R."/>
            <person name="McInerney M.J."/>
            <person name="Morrison M."/>
            <person name="Plugge C."/>
            <person name="Rohlin L."/>
            <person name="Scholten J."/>
            <person name="Sieber J."/>
            <person name="Stams A.J.M."/>
            <person name="Worm P."/>
            <person name="Henstra A.M."/>
            <person name="Richardson P."/>
        </authorList>
    </citation>
    <scope>NUCLEOTIDE SEQUENCE [LARGE SCALE GENOMIC DNA]</scope>
    <source>
        <strain>DSM 10017 / MPOB</strain>
    </source>
</reference>
<feature type="chain" id="PRO_1000014309" description="Small ribosomal subunit protein uS7">
    <location>
        <begin position="1"/>
        <end position="156"/>
    </location>
</feature>
<proteinExistence type="inferred from homology"/>
<protein>
    <recommendedName>
        <fullName evidence="1">Small ribosomal subunit protein uS7</fullName>
    </recommendedName>
    <alternativeName>
        <fullName evidence="2">30S ribosomal protein S7</fullName>
    </alternativeName>
</protein>
<organism>
    <name type="scientific">Syntrophobacter fumaroxidans (strain DSM 10017 / MPOB)</name>
    <dbReference type="NCBI Taxonomy" id="335543"/>
    <lineage>
        <taxon>Bacteria</taxon>
        <taxon>Pseudomonadati</taxon>
        <taxon>Thermodesulfobacteriota</taxon>
        <taxon>Syntrophobacteria</taxon>
        <taxon>Syntrophobacterales</taxon>
        <taxon>Syntrophobacteraceae</taxon>
        <taxon>Syntrophobacter</taxon>
    </lineage>
</organism>
<keyword id="KW-1185">Reference proteome</keyword>
<keyword id="KW-0687">Ribonucleoprotein</keyword>
<keyword id="KW-0689">Ribosomal protein</keyword>
<keyword id="KW-0694">RNA-binding</keyword>
<keyword id="KW-0699">rRNA-binding</keyword>
<keyword id="KW-0820">tRNA-binding</keyword>